<feature type="chain" id="PRO_0000188622" description="Glycogen synthase">
    <location>
        <begin position="1"/>
        <end position="479"/>
    </location>
</feature>
<feature type="binding site" evidence="1">
    <location>
        <position position="16"/>
    </location>
    <ligand>
        <name>ADP-alpha-D-glucose</name>
        <dbReference type="ChEBI" id="CHEBI:57498"/>
    </ligand>
</feature>
<accession>Q890I8</accession>
<accession>F9US52</accession>
<dbReference type="EC" id="2.4.1.21" evidence="1"/>
<dbReference type="EMBL" id="AL935263">
    <property type="protein sequence ID" value="CCC77599.1"/>
    <property type="molecule type" value="Genomic_DNA"/>
</dbReference>
<dbReference type="RefSeq" id="WP_011100853.1">
    <property type="nucleotide sequence ID" value="NC_004567.2"/>
</dbReference>
<dbReference type="RefSeq" id="YP_004888113.1">
    <property type="nucleotide sequence ID" value="NC_004567.2"/>
</dbReference>
<dbReference type="SMR" id="Q890I8"/>
<dbReference type="STRING" id="220668.lp_0023"/>
<dbReference type="CAZy" id="GT5">
    <property type="family name" value="Glycosyltransferase Family 5"/>
</dbReference>
<dbReference type="EnsemblBacteria" id="CCC77599">
    <property type="protein sequence ID" value="CCC77599"/>
    <property type="gene ID" value="lp_0023"/>
</dbReference>
<dbReference type="KEGG" id="lpl:lp_0023"/>
<dbReference type="PATRIC" id="fig|220668.9.peg.21"/>
<dbReference type="eggNOG" id="COG0297">
    <property type="taxonomic scope" value="Bacteria"/>
</dbReference>
<dbReference type="HOGENOM" id="CLU_009583_18_2_9"/>
<dbReference type="OrthoDB" id="9808590at2"/>
<dbReference type="PhylomeDB" id="Q890I8"/>
<dbReference type="UniPathway" id="UPA00164"/>
<dbReference type="Proteomes" id="UP000000432">
    <property type="component" value="Chromosome"/>
</dbReference>
<dbReference type="GO" id="GO:0009011">
    <property type="term" value="F:alpha-1,4-glucan glucosyltransferase (ADP-glucose donor) activity"/>
    <property type="evidence" value="ECO:0007669"/>
    <property type="project" value="UniProtKB-UniRule"/>
</dbReference>
<dbReference type="GO" id="GO:0004373">
    <property type="term" value="F:alpha-1,4-glucan glucosyltransferase (UDP-glucose donor) activity"/>
    <property type="evidence" value="ECO:0007669"/>
    <property type="project" value="InterPro"/>
</dbReference>
<dbReference type="GO" id="GO:0005978">
    <property type="term" value="P:glycogen biosynthetic process"/>
    <property type="evidence" value="ECO:0007669"/>
    <property type="project" value="UniProtKB-UniRule"/>
</dbReference>
<dbReference type="CDD" id="cd03791">
    <property type="entry name" value="GT5_Glycogen_synthase_DULL1-like"/>
    <property type="match status" value="1"/>
</dbReference>
<dbReference type="Gene3D" id="3.40.50.2000">
    <property type="entry name" value="Glycogen Phosphorylase B"/>
    <property type="match status" value="2"/>
</dbReference>
<dbReference type="HAMAP" id="MF_00484">
    <property type="entry name" value="Glycogen_synth"/>
    <property type="match status" value="1"/>
</dbReference>
<dbReference type="InterPro" id="IPR001296">
    <property type="entry name" value="Glyco_trans_1"/>
</dbReference>
<dbReference type="InterPro" id="IPR011835">
    <property type="entry name" value="GS/SS"/>
</dbReference>
<dbReference type="InterPro" id="IPR013534">
    <property type="entry name" value="Starch_synth_cat_dom"/>
</dbReference>
<dbReference type="NCBIfam" id="TIGR02095">
    <property type="entry name" value="glgA"/>
    <property type="match status" value="1"/>
</dbReference>
<dbReference type="NCBIfam" id="NF001898">
    <property type="entry name" value="PRK00654.1-1"/>
    <property type="match status" value="1"/>
</dbReference>
<dbReference type="PANTHER" id="PTHR45825:SF11">
    <property type="entry name" value="ALPHA AMYLASE DOMAIN-CONTAINING PROTEIN"/>
    <property type="match status" value="1"/>
</dbReference>
<dbReference type="PANTHER" id="PTHR45825">
    <property type="entry name" value="GRANULE-BOUND STARCH SYNTHASE 1, CHLOROPLASTIC/AMYLOPLASTIC"/>
    <property type="match status" value="1"/>
</dbReference>
<dbReference type="Pfam" id="PF08323">
    <property type="entry name" value="Glyco_transf_5"/>
    <property type="match status" value="1"/>
</dbReference>
<dbReference type="Pfam" id="PF00534">
    <property type="entry name" value="Glycos_transf_1"/>
    <property type="match status" value="1"/>
</dbReference>
<dbReference type="SUPFAM" id="SSF53756">
    <property type="entry name" value="UDP-Glycosyltransferase/glycogen phosphorylase"/>
    <property type="match status" value="1"/>
</dbReference>
<organism>
    <name type="scientific">Lactiplantibacillus plantarum (strain ATCC BAA-793 / NCIMB 8826 / WCFS1)</name>
    <name type="common">Lactobacillus plantarum</name>
    <dbReference type="NCBI Taxonomy" id="220668"/>
    <lineage>
        <taxon>Bacteria</taxon>
        <taxon>Bacillati</taxon>
        <taxon>Bacillota</taxon>
        <taxon>Bacilli</taxon>
        <taxon>Lactobacillales</taxon>
        <taxon>Lactobacillaceae</taxon>
        <taxon>Lactiplantibacillus</taxon>
    </lineage>
</organism>
<reference key="1">
    <citation type="journal article" date="2003" name="Proc. Natl. Acad. Sci. U.S.A.">
        <title>Complete genome sequence of Lactobacillus plantarum WCFS1.</title>
        <authorList>
            <person name="Kleerebezem M."/>
            <person name="Boekhorst J."/>
            <person name="van Kranenburg R."/>
            <person name="Molenaar D."/>
            <person name="Kuipers O.P."/>
            <person name="Leer R."/>
            <person name="Tarchini R."/>
            <person name="Peters S.A."/>
            <person name="Sandbrink H.M."/>
            <person name="Fiers M.W.E.J."/>
            <person name="Stiekema W."/>
            <person name="Klein Lankhorst R.M."/>
            <person name="Bron P.A."/>
            <person name="Hoffer S.M."/>
            <person name="Nierop Groot M.N."/>
            <person name="Kerkhoven R."/>
            <person name="De Vries M."/>
            <person name="Ursing B."/>
            <person name="De Vos W.M."/>
            <person name="Siezen R.J."/>
        </authorList>
    </citation>
    <scope>NUCLEOTIDE SEQUENCE [LARGE SCALE GENOMIC DNA]</scope>
    <source>
        <strain>ATCC BAA-793 / NCIMB 8826 / WCFS1</strain>
    </source>
</reference>
<reference key="2">
    <citation type="journal article" date="2012" name="J. Bacteriol.">
        <title>Complete resequencing and reannotation of the Lactobacillus plantarum WCFS1 genome.</title>
        <authorList>
            <person name="Siezen R.J."/>
            <person name="Francke C."/>
            <person name="Renckens B."/>
            <person name="Boekhorst J."/>
            <person name="Wels M."/>
            <person name="Kleerebezem M."/>
            <person name="van Hijum S.A."/>
        </authorList>
    </citation>
    <scope>NUCLEOTIDE SEQUENCE [LARGE SCALE GENOMIC DNA]</scope>
    <scope>GENOME REANNOTATION</scope>
    <source>
        <strain>ATCC BAA-793 / NCIMB 8826 / WCFS1</strain>
    </source>
</reference>
<proteinExistence type="inferred from homology"/>
<comment type="function">
    <text evidence="1">Synthesizes alpha-1,4-glucan chains using ADP-glucose.</text>
</comment>
<comment type="catalytic activity">
    <reaction evidence="1">
        <text>[(1-&gt;4)-alpha-D-glucosyl](n) + ADP-alpha-D-glucose = [(1-&gt;4)-alpha-D-glucosyl](n+1) + ADP + H(+)</text>
        <dbReference type="Rhea" id="RHEA:18189"/>
        <dbReference type="Rhea" id="RHEA-COMP:9584"/>
        <dbReference type="Rhea" id="RHEA-COMP:9587"/>
        <dbReference type="ChEBI" id="CHEBI:15378"/>
        <dbReference type="ChEBI" id="CHEBI:15444"/>
        <dbReference type="ChEBI" id="CHEBI:57498"/>
        <dbReference type="ChEBI" id="CHEBI:456216"/>
        <dbReference type="EC" id="2.4.1.21"/>
    </reaction>
</comment>
<comment type="pathway">
    <text evidence="1">Glycan biosynthesis; glycogen biosynthesis.</text>
</comment>
<comment type="similarity">
    <text evidence="1">Belongs to the glycosyltransferase 1 family. Bacterial/plant glycogen synthase subfamily.</text>
</comment>
<name>GLGA_LACPL</name>
<sequence length="479" mass="54400">MTRVLFAAAEAAPFYKTGGLGDVSMALPRALQAEGIETRVVIPYYPHQMPTEYQQQLVPVTHFTVQVGEHAMYCGIKTLTVAHVQYYLIDNLDYFGREGLYGYWDDGARFAFFQMAVCEMMEQIDYIPDILQLNDWHTAFIPVLLAEKYYWIEAYRDIKTVLTIHNLQFQGVYDPIILDSLFRIGTETYTEAGVAFYDQVNWLKGGINFADAVNTVSPTYAQEIQTPAFGERLDGVLRANRYKLSGILNGIDMQLYDPATDLALTANYSAKDLKPKRQNKRALQRRLGLPVKNMPVLAVVSRLTKQKGIDLLLDALNPFLQQQDVQLIVLGTGDPALERALRTYQSAYPQKVVAAIQFDTQLAQQIYAASDIFLMPSAFEPCGLSQMMAMHYGTLPIVHAVGGLRDTVIPYNRYTGQGTGFSFDDYQPAVLRKIMILAVTLYRQHPLVWRQLQHQAMTCDFGWEHSAQQYRATYQKLMR</sequence>
<keyword id="KW-0320">Glycogen biosynthesis</keyword>
<keyword id="KW-0328">Glycosyltransferase</keyword>
<keyword id="KW-1185">Reference proteome</keyword>
<keyword id="KW-0808">Transferase</keyword>
<protein>
    <recommendedName>
        <fullName evidence="1">Glycogen synthase</fullName>
        <ecNumber evidence="1">2.4.1.21</ecNumber>
    </recommendedName>
    <alternativeName>
        <fullName evidence="1">Starch [bacterial glycogen] synthase</fullName>
    </alternativeName>
</protein>
<gene>
    <name evidence="1" type="primary">glgA</name>
    <name type="ordered locus">lp_0023</name>
</gene>
<evidence type="ECO:0000255" key="1">
    <source>
        <dbReference type="HAMAP-Rule" id="MF_00484"/>
    </source>
</evidence>